<feature type="chain" id="PRO_0000139214" description="Methionine--tRNA ligase">
    <location>
        <begin position="1"/>
        <end position="628"/>
    </location>
</feature>
<feature type="domain" description="tRNA-binding">
    <location>
        <begin position="527"/>
        <end position="628"/>
    </location>
</feature>
<feature type="short sequence motif" description="'HIGH' region">
    <location>
        <begin position="9"/>
        <end position="19"/>
    </location>
</feature>
<feature type="short sequence motif" description="'KMSKS' region">
    <location>
        <begin position="294"/>
        <end position="298"/>
    </location>
</feature>
<feature type="binding site" evidence="1">
    <location>
        <position position="124"/>
    </location>
    <ligand>
        <name>Zn(2+)</name>
        <dbReference type="ChEBI" id="CHEBI:29105"/>
    </ligand>
</feature>
<feature type="binding site" evidence="1">
    <location>
        <position position="127"/>
    </location>
    <ligand>
        <name>Zn(2+)</name>
        <dbReference type="ChEBI" id="CHEBI:29105"/>
    </ligand>
</feature>
<feature type="binding site" evidence="1">
    <location>
        <position position="142"/>
    </location>
    <ligand>
        <name>Zn(2+)</name>
        <dbReference type="ChEBI" id="CHEBI:29105"/>
    </ligand>
</feature>
<feature type="binding site" evidence="1">
    <location>
        <position position="145"/>
    </location>
    <ligand>
        <name>Zn(2+)</name>
        <dbReference type="ChEBI" id="CHEBI:29105"/>
    </ligand>
</feature>
<feature type="binding site" evidence="1">
    <location>
        <position position="297"/>
    </location>
    <ligand>
        <name>ATP</name>
        <dbReference type="ChEBI" id="CHEBI:30616"/>
    </ligand>
</feature>
<reference key="1">
    <citation type="journal article" date="2000" name="Nature">
        <title>The genome sequence of the food-borne pathogen Campylobacter jejuni reveals hypervariable sequences.</title>
        <authorList>
            <person name="Parkhill J."/>
            <person name="Wren B.W."/>
            <person name="Mungall K.L."/>
            <person name="Ketley J.M."/>
            <person name="Churcher C.M."/>
            <person name="Basham D."/>
            <person name="Chillingworth T."/>
            <person name="Davies R.M."/>
            <person name="Feltwell T."/>
            <person name="Holroyd S."/>
            <person name="Jagels K."/>
            <person name="Karlyshev A.V."/>
            <person name="Moule S."/>
            <person name="Pallen M.J."/>
            <person name="Penn C.W."/>
            <person name="Quail M.A."/>
            <person name="Rajandream M.A."/>
            <person name="Rutherford K.M."/>
            <person name="van Vliet A.H.M."/>
            <person name="Whitehead S."/>
            <person name="Barrell B.G."/>
        </authorList>
    </citation>
    <scope>NUCLEOTIDE SEQUENCE [LARGE SCALE GENOMIC DNA]</scope>
    <source>
        <strain>ATCC 700819 / NCTC 11168</strain>
    </source>
</reference>
<evidence type="ECO:0000250" key="1"/>
<evidence type="ECO:0000305" key="2"/>
<sequence>MRYITTPIYYVNDVPHLGHAYTTIIADTLARFYRLQGHETRFLTGTDEHGQKIEEAAKLRNSTPQEYADKISFEFKKLWDEFEITYDIYARTTDTRHIEFIKAMFLKMWQKGDIYKDEYEGHYCISCESFFTQSQLINDCSCPDCGKQTRILKEESYFFKLSKYQDKILQWYEEKDPILPKNKKNELINFVQNGLKDLSITRTSFDWGIKLPQEINDDKHIIYVWLDALFIYVSSLDFQNKGENAKFWPAHVHLVGKDILRFHAIYWPAFLMSVDLPLPKFIGAHGWWTKEGEKMSKSKGNVVKPKEVVDAYGSEAFRYFLLREVPFGNDGDFSENMLINRINAELSNEFGNLLNRIIGMSTKYSQGNISKEGVLKFYNAELNQAKEHLNLAVEFLENLQCNRYLEELFKALSVANLAISKYEPWSLIKENKHEQANALVALCANILAKTSLLLSPTLPKSSQKVALALNFEISSANYTKMILDNELLDFKANPCEALFPKVEKALLKQEIKEEPKKEESPKIKIDDFAKIEIKVAKVLDCQNIEGSEKLLKFQLELDDKEIRQVLSGIAKYYKASDLIGKQVCVISNLKKAKIFGHESDGMILSAKSGDKLVLIAPEQLVQNGSLVG</sequence>
<protein>
    <recommendedName>
        <fullName>Methionine--tRNA ligase</fullName>
        <ecNumber>6.1.1.10</ecNumber>
    </recommendedName>
    <alternativeName>
        <fullName>Methionyl-tRNA synthetase</fullName>
        <shortName>MetRS</shortName>
    </alternativeName>
</protein>
<gene>
    <name type="primary">metG</name>
    <name type="synonym">metS</name>
    <name type="ordered locus">Cj0838c</name>
</gene>
<accession>Q9PP85</accession>
<accession>Q0PA52</accession>
<organism>
    <name type="scientific">Campylobacter jejuni subsp. jejuni serotype O:2 (strain ATCC 700819 / NCTC 11168)</name>
    <dbReference type="NCBI Taxonomy" id="192222"/>
    <lineage>
        <taxon>Bacteria</taxon>
        <taxon>Pseudomonadati</taxon>
        <taxon>Campylobacterota</taxon>
        <taxon>Epsilonproteobacteria</taxon>
        <taxon>Campylobacterales</taxon>
        <taxon>Campylobacteraceae</taxon>
        <taxon>Campylobacter</taxon>
    </lineage>
</organism>
<dbReference type="EC" id="6.1.1.10"/>
<dbReference type="EMBL" id="AL111168">
    <property type="protein sequence ID" value="CAL34966.1"/>
    <property type="molecule type" value="Genomic_DNA"/>
</dbReference>
<dbReference type="PIR" id="F81356">
    <property type="entry name" value="F81356"/>
</dbReference>
<dbReference type="RefSeq" id="WP_002852639.1">
    <property type="nucleotide sequence ID" value="NZ_SZUC01000001.1"/>
</dbReference>
<dbReference type="RefSeq" id="YP_002344245.1">
    <property type="nucleotide sequence ID" value="NC_002163.1"/>
</dbReference>
<dbReference type="SMR" id="Q9PP85"/>
<dbReference type="IntAct" id="Q9PP85">
    <property type="interactions" value="1"/>
</dbReference>
<dbReference type="STRING" id="192222.Cj0838c"/>
<dbReference type="PaxDb" id="192222-Cj0838c"/>
<dbReference type="EnsemblBacteria" id="CAL34966">
    <property type="protein sequence ID" value="CAL34966"/>
    <property type="gene ID" value="Cj0838c"/>
</dbReference>
<dbReference type="GeneID" id="905186"/>
<dbReference type="KEGG" id="cje:Cj0838c"/>
<dbReference type="PATRIC" id="fig|192222.6.peg.826"/>
<dbReference type="eggNOG" id="COG0073">
    <property type="taxonomic scope" value="Bacteria"/>
</dbReference>
<dbReference type="eggNOG" id="COG0143">
    <property type="taxonomic scope" value="Bacteria"/>
</dbReference>
<dbReference type="HOGENOM" id="CLU_009710_9_4_7"/>
<dbReference type="OrthoDB" id="9810191at2"/>
<dbReference type="Proteomes" id="UP000000799">
    <property type="component" value="Chromosome"/>
</dbReference>
<dbReference type="GO" id="GO:0005737">
    <property type="term" value="C:cytoplasm"/>
    <property type="evidence" value="ECO:0007669"/>
    <property type="project" value="UniProtKB-SubCell"/>
</dbReference>
<dbReference type="GO" id="GO:0005524">
    <property type="term" value="F:ATP binding"/>
    <property type="evidence" value="ECO:0007669"/>
    <property type="project" value="UniProtKB-UniRule"/>
</dbReference>
<dbReference type="GO" id="GO:0046872">
    <property type="term" value="F:metal ion binding"/>
    <property type="evidence" value="ECO:0007669"/>
    <property type="project" value="UniProtKB-KW"/>
</dbReference>
<dbReference type="GO" id="GO:0004825">
    <property type="term" value="F:methionine-tRNA ligase activity"/>
    <property type="evidence" value="ECO:0007669"/>
    <property type="project" value="UniProtKB-UniRule"/>
</dbReference>
<dbReference type="GO" id="GO:0000049">
    <property type="term" value="F:tRNA binding"/>
    <property type="evidence" value="ECO:0007669"/>
    <property type="project" value="UniProtKB-KW"/>
</dbReference>
<dbReference type="GO" id="GO:0006431">
    <property type="term" value="P:methionyl-tRNA aminoacylation"/>
    <property type="evidence" value="ECO:0007669"/>
    <property type="project" value="UniProtKB-UniRule"/>
</dbReference>
<dbReference type="CDD" id="cd00814">
    <property type="entry name" value="MetRS_core"/>
    <property type="match status" value="1"/>
</dbReference>
<dbReference type="CDD" id="cd02800">
    <property type="entry name" value="tRNA_bind_EcMetRS_like"/>
    <property type="match status" value="1"/>
</dbReference>
<dbReference type="FunFam" id="2.170.220.10:FF:000002">
    <property type="entry name" value="Methionine--tRNA ligase"/>
    <property type="match status" value="1"/>
</dbReference>
<dbReference type="FunFam" id="2.40.50.140:FF:000042">
    <property type="entry name" value="Methionine--tRNA ligase"/>
    <property type="match status" value="1"/>
</dbReference>
<dbReference type="Gene3D" id="2.170.220.10">
    <property type="match status" value="1"/>
</dbReference>
<dbReference type="Gene3D" id="3.40.50.620">
    <property type="entry name" value="HUPs"/>
    <property type="match status" value="1"/>
</dbReference>
<dbReference type="Gene3D" id="1.10.730.10">
    <property type="entry name" value="Isoleucyl-tRNA Synthetase, Domain 1"/>
    <property type="match status" value="1"/>
</dbReference>
<dbReference type="Gene3D" id="2.40.50.140">
    <property type="entry name" value="Nucleic acid-binding proteins"/>
    <property type="match status" value="1"/>
</dbReference>
<dbReference type="HAMAP" id="MF_01228">
    <property type="entry name" value="Met_tRNA_synth_type2"/>
    <property type="match status" value="1"/>
</dbReference>
<dbReference type="InterPro" id="IPR004495">
    <property type="entry name" value="Met-tRNA-synth_bsu_C"/>
</dbReference>
<dbReference type="InterPro" id="IPR014758">
    <property type="entry name" value="Met-tRNA_synth"/>
</dbReference>
<dbReference type="InterPro" id="IPR023457">
    <property type="entry name" value="Met-tRNA_synth_2"/>
</dbReference>
<dbReference type="InterPro" id="IPR015413">
    <property type="entry name" value="Methionyl/Leucyl_tRNA_Synth"/>
</dbReference>
<dbReference type="InterPro" id="IPR033911">
    <property type="entry name" value="MetRS_core"/>
</dbReference>
<dbReference type="InterPro" id="IPR012340">
    <property type="entry name" value="NA-bd_OB-fold"/>
</dbReference>
<dbReference type="InterPro" id="IPR014729">
    <property type="entry name" value="Rossmann-like_a/b/a_fold"/>
</dbReference>
<dbReference type="InterPro" id="IPR002547">
    <property type="entry name" value="tRNA-bd_dom"/>
</dbReference>
<dbReference type="InterPro" id="IPR032678">
    <property type="entry name" value="tRNA-synt_1_cat_dom"/>
</dbReference>
<dbReference type="InterPro" id="IPR009080">
    <property type="entry name" value="tRNAsynth_Ia_anticodon-bd"/>
</dbReference>
<dbReference type="NCBIfam" id="TIGR00398">
    <property type="entry name" value="metG"/>
    <property type="match status" value="1"/>
</dbReference>
<dbReference type="NCBIfam" id="TIGR00399">
    <property type="entry name" value="metG_C_term"/>
    <property type="match status" value="1"/>
</dbReference>
<dbReference type="NCBIfam" id="NF008900">
    <property type="entry name" value="PRK12267.1"/>
    <property type="match status" value="1"/>
</dbReference>
<dbReference type="PANTHER" id="PTHR43326:SF1">
    <property type="entry name" value="METHIONINE--TRNA LIGASE, MITOCHONDRIAL"/>
    <property type="match status" value="1"/>
</dbReference>
<dbReference type="PANTHER" id="PTHR43326">
    <property type="entry name" value="METHIONYL-TRNA SYNTHETASE"/>
    <property type="match status" value="1"/>
</dbReference>
<dbReference type="Pfam" id="PF01406">
    <property type="entry name" value="tRNA-synt_1e"/>
    <property type="match status" value="1"/>
</dbReference>
<dbReference type="Pfam" id="PF09334">
    <property type="entry name" value="tRNA-synt_1g"/>
    <property type="match status" value="1"/>
</dbReference>
<dbReference type="Pfam" id="PF01588">
    <property type="entry name" value="tRNA_bind"/>
    <property type="match status" value="1"/>
</dbReference>
<dbReference type="PRINTS" id="PR01041">
    <property type="entry name" value="TRNASYNTHMET"/>
</dbReference>
<dbReference type="SUPFAM" id="SSF47323">
    <property type="entry name" value="Anticodon-binding domain of a subclass of class I aminoacyl-tRNA synthetases"/>
    <property type="match status" value="1"/>
</dbReference>
<dbReference type="SUPFAM" id="SSF50249">
    <property type="entry name" value="Nucleic acid-binding proteins"/>
    <property type="match status" value="1"/>
</dbReference>
<dbReference type="SUPFAM" id="SSF52374">
    <property type="entry name" value="Nucleotidylyl transferase"/>
    <property type="match status" value="1"/>
</dbReference>
<dbReference type="PROSITE" id="PS50886">
    <property type="entry name" value="TRBD"/>
    <property type="match status" value="1"/>
</dbReference>
<keyword id="KW-0030">Aminoacyl-tRNA synthetase</keyword>
<keyword id="KW-0067">ATP-binding</keyword>
<keyword id="KW-0963">Cytoplasm</keyword>
<keyword id="KW-0436">Ligase</keyword>
<keyword id="KW-0479">Metal-binding</keyword>
<keyword id="KW-0547">Nucleotide-binding</keyword>
<keyword id="KW-0648">Protein biosynthesis</keyword>
<keyword id="KW-1185">Reference proteome</keyword>
<keyword id="KW-0694">RNA-binding</keyword>
<keyword id="KW-0820">tRNA-binding</keyword>
<keyword id="KW-0862">Zinc</keyword>
<comment type="function">
    <text evidence="1">Is required not only for elongation of protein synthesis but also for the initiation of all mRNA translation through initiator tRNA(fMet) aminoacylation.</text>
</comment>
<comment type="catalytic activity">
    <reaction>
        <text>tRNA(Met) + L-methionine + ATP = L-methionyl-tRNA(Met) + AMP + diphosphate</text>
        <dbReference type="Rhea" id="RHEA:13481"/>
        <dbReference type="Rhea" id="RHEA-COMP:9667"/>
        <dbReference type="Rhea" id="RHEA-COMP:9698"/>
        <dbReference type="ChEBI" id="CHEBI:30616"/>
        <dbReference type="ChEBI" id="CHEBI:33019"/>
        <dbReference type="ChEBI" id="CHEBI:57844"/>
        <dbReference type="ChEBI" id="CHEBI:78442"/>
        <dbReference type="ChEBI" id="CHEBI:78530"/>
        <dbReference type="ChEBI" id="CHEBI:456215"/>
        <dbReference type="EC" id="6.1.1.10"/>
    </reaction>
</comment>
<comment type="cofactor">
    <cofactor evidence="1">
        <name>Zn(2+)</name>
        <dbReference type="ChEBI" id="CHEBI:29105"/>
    </cofactor>
    <text evidence="1">Binds 1 zinc ion per subunit.</text>
</comment>
<comment type="subunit">
    <text evidence="1">Homodimer.</text>
</comment>
<comment type="subcellular location">
    <subcellularLocation>
        <location evidence="1">Cytoplasm</location>
    </subcellularLocation>
</comment>
<comment type="similarity">
    <text evidence="2">Belongs to the class-I aminoacyl-tRNA synthetase family. MetG type 2A subfamily.</text>
</comment>
<name>SYM_CAMJE</name>
<proteinExistence type="inferred from homology"/>